<comment type="function">
    <text evidence="1">Part of the twin-arginine translocation (Tat) system that transports large folded proteins containing a characteristic twin-arginine motif in their signal peptide across membranes. TatA could form the protein-conducting channel of the Tat system.</text>
</comment>
<comment type="subunit">
    <text evidence="1">The Tat system comprises two distinct complexes: a TatABC complex, containing multiple copies of TatA, TatB and TatC subunits, and a separate TatA complex, containing only TatA subunits. Substrates initially bind to the TatABC complex, which probably triggers association of the separate TatA complex to form the active translocon.</text>
</comment>
<comment type="subcellular location">
    <subcellularLocation>
        <location evidence="1">Cell inner membrane</location>
        <topology evidence="1">Single-pass membrane protein</topology>
    </subcellularLocation>
</comment>
<comment type="similarity">
    <text evidence="1">Belongs to the TatA/E family.</text>
</comment>
<name>TATA_CAMLR</name>
<reference key="1">
    <citation type="journal article" date="2008" name="Foodborne Pathog. Dis.">
        <title>The complete genome sequence and analysis of the human pathogen Campylobacter lari.</title>
        <authorList>
            <person name="Miller W.G."/>
            <person name="Wang G."/>
            <person name="Binnewies T.T."/>
            <person name="Parker C.T."/>
        </authorList>
    </citation>
    <scope>NUCLEOTIDE SEQUENCE [LARGE SCALE GENOMIC DNA]</scope>
    <source>
        <strain>RM2100 / D67 / ATCC BAA-1060</strain>
    </source>
</reference>
<gene>
    <name evidence="1" type="primary">tatA</name>
    <name type="ordered locus">Cla_1088</name>
</gene>
<sequence length="79" mass="8950">MHMPSGTQWLIILLIVVLLFGAKKIPELAKGLGKGIKTFKDEMNTEDDKKITQEDAQKIEKINEKDILAKENNEEVKKA</sequence>
<evidence type="ECO:0000255" key="1">
    <source>
        <dbReference type="HAMAP-Rule" id="MF_00236"/>
    </source>
</evidence>
<protein>
    <recommendedName>
        <fullName evidence="1">Sec-independent protein translocase protein TatA</fullName>
    </recommendedName>
</protein>
<accession>B9KCX1</accession>
<feature type="chain" id="PRO_1000197862" description="Sec-independent protein translocase protein TatA">
    <location>
        <begin position="1"/>
        <end position="79"/>
    </location>
</feature>
<feature type="transmembrane region" description="Helical" evidence="1">
    <location>
        <begin position="1"/>
        <end position="21"/>
    </location>
</feature>
<dbReference type="EMBL" id="CP000932">
    <property type="protein sequence ID" value="ACM64410.1"/>
    <property type="molecule type" value="Genomic_DNA"/>
</dbReference>
<dbReference type="RefSeq" id="WP_012661793.1">
    <property type="nucleotide sequence ID" value="NC_012039.1"/>
</dbReference>
<dbReference type="SMR" id="B9KCX1"/>
<dbReference type="STRING" id="306263.Cla_1088"/>
<dbReference type="KEGG" id="cla:CLA_1088"/>
<dbReference type="PATRIC" id="fig|306263.5.peg.1073"/>
<dbReference type="eggNOG" id="COG1826">
    <property type="taxonomic scope" value="Bacteria"/>
</dbReference>
<dbReference type="HOGENOM" id="CLU_086034_5_4_7"/>
<dbReference type="Proteomes" id="UP000007727">
    <property type="component" value="Chromosome"/>
</dbReference>
<dbReference type="GO" id="GO:0033281">
    <property type="term" value="C:TAT protein transport complex"/>
    <property type="evidence" value="ECO:0007669"/>
    <property type="project" value="UniProtKB-UniRule"/>
</dbReference>
<dbReference type="GO" id="GO:0008320">
    <property type="term" value="F:protein transmembrane transporter activity"/>
    <property type="evidence" value="ECO:0007669"/>
    <property type="project" value="UniProtKB-UniRule"/>
</dbReference>
<dbReference type="GO" id="GO:0043953">
    <property type="term" value="P:protein transport by the Tat complex"/>
    <property type="evidence" value="ECO:0007669"/>
    <property type="project" value="UniProtKB-UniRule"/>
</dbReference>
<dbReference type="Gene3D" id="1.20.5.3310">
    <property type="match status" value="1"/>
</dbReference>
<dbReference type="HAMAP" id="MF_00236">
    <property type="entry name" value="TatA_E"/>
    <property type="match status" value="1"/>
</dbReference>
<dbReference type="InterPro" id="IPR003369">
    <property type="entry name" value="TatA/B/E"/>
</dbReference>
<dbReference type="InterPro" id="IPR006312">
    <property type="entry name" value="TatA/E"/>
</dbReference>
<dbReference type="NCBIfam" id="TIGR01411">
    <property type="entry name" value="tatAE"/>
    <property type="match status" value="1"/>
</dbReference>
<dbReference type="PANTHER" id="PTHR42982">
    <property type="entry name" value="SEC-INDEPENDENT PROTEIN TRANSLOCASE PROTEIN TATA"/>
    <property type="match status" value="1"/>
</dbReference>
<dbReference type="PANTHER" id="PTHR42982:SF1">
    <property type="entry name" value="SEC-INDEPENDENT PROTEIN TRANSLOCASE PROTEIN TATA"/>
    <property type="match status" value="1"/>
</dbReference>
<dbReference type="Pfam" id="PF02416">
    <property type="entry name" value="TatA_B_E"/>
    <property type="match status" value="1"/>
</dbReference>
<keyword id="KW-0997">Cell inner membrane</keyword>
<keyword id="KW-1003">Cell membrane</keyword>
<keyword id="KW-0472">Membrane</keyword>
<keyword id="KW-0653">Protein transport</keyword>
<keyword id="KW-1185">Reference proteome</keyword>
<keyword id="KW-0811">Translocation</keyword>
<keyword id="KW-0812">Transmembrane</keyword>
<keyword id="KW-1133">Transmembrane helix</keyword>
<keyword id="KW-0813">Transport</keyword>
<organism>
    <name type="scientific">Campylobacter lari (strain RM2100 / D67 / ATCC BAA-1060)</name>
    <dbReference type="NCBI Taxonomy" id="306263"/>
    <lineage>
        <taxon>Bacteria</taxon>
        <taxon>Pseudomonadati</taxon>
        <taxon>Campylobacterota</taxon>
        <taxon>Epsilonproteobacteria</taxon>
        <taxon>Campylobacterales</taxon>
        <taxon>Campylobacteraceae</taxon>
        <taxon>Campylobacter</taxon>
    </lineage>
</organism>
<proteinExistence type="inferred from homology"/>